<organism>
    <name type="scientific">Arabidopsis thaliana</name>
    <name type="common">Mouse-ear cress</name>
    <dbReference type="NCBI Taxonomy" id="3702"/>
    <lineage>
        <taxon>Eukaryota</taxon>
        <taxon>Viridiplantae</taxon>
        <taxon>Streptophyta</taxon>
        <taxon>Embryophyta</taxon>
        <taxon>Tracheophyta</taxon>
        <taxon>Spermatophyta</taxon>
        <taxon>Magnoliopsida</taxon>
        <taxon>eudicotyledons</taxon>
        <taxon>Gunneridae</taxon>
        <taxon>Pentapetalae</taxon>
        <taxon>rosids</taxon>
        <taxon>malvids</taxon>
        <taxon>Brassicales</taxon>
        <taxon>Brassicaceae</taxon>
        <taxon>Camelineae</taxon>
        <taxon>Arabidopsis</taxon>
    </lineage>
</organism>
<comment type="function">
    <text evidence="1 3">The branched-chain alpha-keto dehydrogenase complex catalyzes the overall conversion of alpha-keto acids to acyl-CoA and CO(2). It contains multiple copies of three enzymatic components: branched-chain alpha-keto acid decarboxylase (E1), lipoamide acyltransferase (E2) and lipoamide dehydrogenase (E3) (By similarity). Required during sugar starvation.</text>
</comment>
<comment type="catalytic activity">
    <reaction>
        <text>N(6)-[(R)-lipoyl]-L-lysyl-[protein] + 3-methyl-2-oxobutanoate + H(+) = N(6)-[(R)-S(8)-2-methylpropanoyldihydrolipoyl]-L-lysyl-[protein] + CO2</text>
        <dbReference type="Rhea" id="RHEA:13457"/>
        <dbReference type="Rhea" id="RHEA-COMP:10474"/>
        <dbReference type="Rhea" id="RHEA-COMP:10497"/>
        <dbReference type="ChEBI" id="CHEBI:11851"/>
        <dbReference type="ChEBI" id="CHEBI:15378"/>
        <dbReference type="ChEBI" id="CHEBI:16526"/>
        <dbReference type="ChEBI" id="CHEBI:83099"/>
        <dbReference type="ChEBI" id="CHEBI:83142"/>
        <dbReference type="EC" id="1.2.4.4"/>
    </reaction>
</comment>
<comment type="cofactor">
    <cofactor evidence="1">
        <name>thiamine diphosphate</name>
        <dbReference type="ChEBI" id="CHEBI:58937"/>
    </cofactor>
</comment>
<comment type="subunit">
    <text evidence="1">Heterotetramer of alpha and beta chains.</text>
</comment>
<comment type="subcellular location">
    <subcellularLocation>
        <location evidence="1">Mitochondrion matrix</location>
    </subcellularLocation>
</comment>
<comment type="induction">
    <text evidence="3">By dark treatment. Down-regulated by sucrose in a hexokinase dependent manner. Up-regulated by Leucine and its derivative alpha-keto acid (KIC).</text>
</comment>
<comment type="miscellaneous">
    <text evidence="1">Bound potassium ions stabilize the protein structure.</text>
</comment>
<comment type="similarity">
    <text evidence="4">Belongs to the BCKDHA family.</text>
</comment>
<evidence type="ECO:0000250" key="1"/>
<evidence type="ECO:0000255" key="2"/>
<evidence type="ECO:0000269" key="3">
    <source>
    </source>
</evidence>
<evidence type="ECO:0000305" key="4"/>
<sequence>MAIWFARSKTLVSSLRHNLNLSTILIKRDYSHRPIFYTTSQLSSTAYLSPFGSLRHESTAVETQADHLVQQIDEVDAQELDFPGGKVGYTSEMKFIPESSSRRIPCYRVLDEDGRIIPDSDFIPVSEKLAVRMYEQMATLQVMDHIFYEAQRQGRISFYLTSVGEEAINIASAAALSPDDVVLPQYREPGVLLWRGFTLEEFANQCFGNKADYGKGRQMPIHYGSNRLNYFTISSPIATQLPQAAGVGYSLKMDKKNACTVTFIGDGGTSEGDFHAGLNFAAVMEAPVVFICRNNGWAISTHISEQFRSDGIVVKGQAYGIRSIRVDGNDALAVYSAVRSAREMAVTEQRPVLIEMMTYRVGHHSTSDDSTKYRAADEIQYWKMSRNPVNRFRKWVEDNGWWSEEDESKLRSNARKQLLQAIQAAEKWEKQPLTELFNDVYDVKPKNLEEQELGLKELVKKQPQDYPPGFHV</sequence>
<name>ODBA1_ARATH</name>
<feature type="transit peptide" description="Mitochondrion" evidence="2">
    <location>
        <begin position="1"/>
        <end position="56"/>
    </location>
</feature>
<feature type="chain" id="PRO_0000422382" description="2-oxoisovalerate dehydrogenase subunit alpha 1, mitochondrial">
    <location>
        <begin position="57"/>
        <end position="472"/>
    </location>
</feature>
<feature type="binding site" evidence="1">
    <location>
        <begin position="185"/>
        <end position="187"/>
    </location>
    <ligand>
        <name>thiamine diphosphate</name>
        <dbReference type="ChEBI" id="CHEBI:58937"/>
    </ligand>
</feature>
<feature type="binding site" evidence="1">
    <location>
        <position position="234"/>
    </location>
    <ligand>
        <name>K(+)</name>
        <dbReference type="ChEBI" id="CHEBI:29103"/>
    </ligand>
</feature>
<feature type="binding site" evidence="1">
    <location>
        <position position="239"/>
    </location>
    <ligand>
        <name>K(+)</name>
        <dbReference type="ChEBI" id="CHEBI:29103"/>
    </ligand>
</feature>
<feature type="binding site" evidence="1">
    <location>
        <position position="240"/>
    </location>
    <ligand>
        <name>K(+)</name>
        <dbReference type="ChEBI" id="CHEBI:29103"/>
    </ligand>
</feature>
<feature type="sequence conflict" description="In Ref. 4; AAC69851." evidence="4" ref="4">
    <original>RSIRVDGN</original>
    <variation>PKHPVWDGT</variation>
    <location>
        <begin position="322"/>
        <end position="329"/>
    </location>
</feature>
<gene>
    <name type="ordered locus">At1g21400</name>
    <name type="ORF">F24J8.4</name>
</gene>
<dbReference type="EC" id="1.2.4.4"/>
<dbReference type="EMBL" id="AC015447">
    <property type="protein sequence ID" value="AAF87894.1"/>
    <property type="molecule type" value="Genomic_DNA"/>
</dbReference>
<dbReference type="EMBL" id="CP002684">
    <property type="protein sequence ID" value="AEE30099.1"/>
    <property type="molecule type" value="Genomic_DNA"/>
</dbReference>
<dbReference type="EMBL" id="AY099615">
    <property type="protein sequence ID" value="AAM20466.1"/>
    <property type="molecule type" value="mRNA"/>
</dbReference>
<dbReference type="EMBL" id="BT000269">
    <property type="protein sequence ID" value="AAN15588.1"/>
    <property type="molecule type" value="mRNA"/>
</dbReference>
<dbReference type="EMBL" id="AF077955">
    <property type="protein sequence ID" value="AAC69851.1"/>
    <property type="molecule type" value="mRNA"/>
</dbReference>
<dbReference type="PIR" id="A86347">
    <property type="entry name" value="A86347"/>
</dbReference>
<dbReference type="PIR" id="T51858">
    <property type="entry name" value="T51858"/>
</dbReference>
<dbReference type="RefSeq" id="NP_173562.1">
    <property type="nucleotide sequence ID" value="NM_101992.5"/>
</dbReference>
<dbReference type="SMR" id="Q9LPL5"/>
<dbReference type="BioGRID" id="23978">
    <property type="interactions" value="1"/>
</dbReference>
<dbReference type="FunCoup" id="Q9LPL5">
    <property type="interactions" value="2292"/>
</dbReference>
<dbReference type="STRING" id="3702.Q9LPL5"/>
<dbReference type="iPTMnet" id="Q9LPL5"/>
<dbReference type="PaxDb" id="3702-AT1G21400.1"/>
<dbReference type="ProteomicsDB" id="238907"/>
<dbReference type="EnsemblPlants" id="AT1G21400.1">
    <property type="protein sequence ID" value="AT1G21400.1"/>
    <property type="gene ID" value="AT1G21400"/>
</dbReference>
<dbReference type="GeneID" id="838739"/>
<dbReference type="Gramene" id="AT1G21400.1">
    <property type="protein sequence ID" value="AT1G21400.1"/>
    <property type="gene ID" value="AT1G21400"/>
</dbReference>
<dbReference type="KEGG" id="ath:AT1G21400"/>
<dbReference type="Araport" id="AT1G21400"/>
<dbReference type="TAIR" id="AT1G21400"/>
<dbReference type="eggNOG" id="KOG1182">
    <property type="taxonomic scope" value="Eukaryota"/>
</dbReference>
<dbReference type="HOGENOM" id="CLU_029393_1_1_1"/>
<dbReference type="InParanoid" id="Q9LPL5"/>
<dbReference type="PhylomeDB" id="Q9LPL5"/>
<dbReference type="PRO" id="PR:Q9LPL5"/>
<dbReference type="Proteomes" id="UP000006548">
    <property type="component" value="Chromosome 1"/>
</dbReference>
<dbReference type="ExpressionAtlas" id="Q9LPL5">
    <property type="expression patterns" value="baseline and differential"/>
</dbReference>
<dbReference type="GO" id="GO:0005759">
    <property type="term" value="C:mitochondrial matrix"/>
    <property type="evidence" value="ECO:0007669"/>
    <property type="project" value="UniProtKB-SubCell"/>
</dbReference>
<dbReference type="GO" id="GO:0003863">
    <property type="term" value="F:3-methyl-2-oxobutanoate dehydrogenase (2-methylpropanoyl-transferring) activity"/>
    <property type="evidence" value="ECO:0007669"/>
    <property type="project" value="UniProtKB-EC"/>
</dbReference>
<dbReference type="GO" id="GO:0046872">
    <property type="term" value="F:metal ion binding"/>
    <property type="evidence" value="ECO:0007669"/>
    <property type="project" value="UniProtKB-KW"/>
</dbReference>
<dbReference type="GO" id="GO:0009083">
    <property type="term" value="P:branched-chain amino acid catabolic process"/>
    <property type="evidence" value="ECO:0000316"/>
    <property type="project" value="TAIR"/>
</dbReference>
<dbReference type="GO" id="GO:0043617">
    <property type="term" value="P:cellular response to sucrose starvation"/>
    <property type="evidence" value="ECO:0000270"/>
    <property type="project" value="UniProtKB"/>
</dbReference>
<dbReference type="GO" id="GO:0009646">
    <property type="term" value="P:response to absence of light"/>
    <property type="evidence" value="ECO:0000270"/>
    <property type="project" value="UniProtKB"/>
</dbReference>
<dbReference type="GO" id="GO:0009744">
    <property type="term" value="P:response to sucrose"/>
    <property type="evidence" value="ECO:0000270"/>
    <property type="project" value="UniProtKB"/>
</dbReference>
<dbReference type="CDD" id="cd02000">
    <property type="entry name" value="TPP_E1_PDC_ADC_BCADC"/>
    <property type="match status" value="1"/>
</dbReference>
<dbReference type="FunFam" id="3.40.50.970:FF:000015">
    <property type="entry name" value="2-oxoisovalerate dehydrogenase subunit alpha"/>
    <property type="match status" value="1"/>
</dbReference>
<dbReference type="Gene3D" id="3.40.50.970">
    <property type="match status" value="1"/>
</dbReference>
<dbReference type="InterPro" id="IPR050771">
    <property type="entry name" value="Alpha-ketoacid_DH_E1_comp"/>
</dbReference>
<dbReference type="InterPro" id="IPR001017">
    <property type="entry name" value="DH_E1"/>
</dbReference>
<dbReference type="InterPro" id="IPR029061">
    <property type="entry name" value="THDP-binding"/>
</dbReference>
<dbReference type="PANTHER" id="PTHR43380">
    <property type="entry name" value="2-OXOISOVALERATE DEHYDROGENASE SUBUNIT ALPHA, MITOCHONDRIAL"/>
    <property type="match status" value="1"/>
</dbReference>
<dbReference type="PANTHER" id="PTHR43380:SF1">
    <property type="entry name" value="2-OXOISOVALERATE DEHYDROGENASE SUBUNIT ALPHA, MITOCHONDRIAL"/>
    <property type="match status" value="1"/>
</dbReference>
<dbReference type="Pfam" id="PF00676">
    <property type="entry name" value="E1_dh"/>
    <property type="match status" value="1"/>
</dbReference>
<dbReference type="SUPFAM" id="SSF52518">
    <property type="entry name" value="Thiamin diphosphate-binding fold (THDP-binding)"/>
    <property type="match status" value="1"/>
</dbReference>
<protein>
    <recommendedName>
        <fullName>2-oxoisovalerate dehydrogenase subunit alpha 1, mitochondrial</fullName>
        <ecNumber>1.2.4.4</ecNumber>
    </recommendedName>
    <alternativeName>
        <fullName>Branched-chain alpha-keto acid dehydrogenase E1 component alpha chain</fullName>
        <shortName>BCKDE1A</shortName>
        <shortName>BCKDH E1-alpha</shortName>
    </alternativeName>
</protein>
<keyword id="KW-0479">Metal-binding</keyword>
<keyword id="KW-0496">Mitochondrion</keyword>
<keyword id="KW-0560">Oxidoreductase</keyword>
<keyword id="KW-0630">Potassium</keyword>
<keyword id="KW-1185">Reference proteome</keyword>
<keyword id="KW-0786">Thiamine pyrophosphate</keyword>
<keyword id="KW-0809">Transit peptide</keyword>
<reference key="1">
    <citation type="journal article" date="2000" name="Nature">
        <title>Sequence and analysis of chromosome 1 of the plant Arabidopsis thaliana.</title>
        <authorList>
            <person name="Theologis A."/>
            <person name="Ecker J.R."/>
            <person name="Palm C.J."/>
            <person name="Federspiel N.A."/>
            <person name="Kaul S."/>
            <person name="White O."/>
            <person name="Alonso J."/>
            <person name="Altafi H."/>
            <person name="Araujo R."/>
            <person name="Bowman C.L."/>
            <person name="Brooks S.Y."/>
            <person name="Buehler E."/>
            <person name="Chan A."/>
            <person name="Chao Q."/>
            <person name="Chen H."/>
            <person name="Cheuk R.F."/>
            <person name="Chin C.W."/>
            <person name="Chung M.K."/>
            <person name="Conn L."/>
            <person name="Conway A.B."/>
            <person name="Conway A.R."/>
            <person name="Creasy T.H."/>
            <person name="Dewar K."/>
            <person name="Dunn P."/>
            <person name="Etgu P."/>
            <person name="Feldblyum T.V."/>
            <person name="Feng J.-D."/>
            <person name="Fong B."/>
            <person name="Fujii C.Y."/>
            <person name="Gill J.E."/>
            <person name="Goldsmith A.D."/>
            <person name="Haas B."/>
            <person name="Hansen N.F."/>
            <person name="Hughes B."/>
            <person name="Huizar L."/>
            <person name="Hunter J.L."/>
            <person name="Jenkins J."/>
            <person name="Johnson-Hopson C."/>
            <person name="Khan S."/>
            <person name="Khaykin E."/>
            <person name="Kim C.J."/>
            <person name="Koo H.L."/>
            <person name="Kremenetskaia I."/>
            <person name="Kurtz D.B."/>
            <person name="Kwan A."/>
            <person name="Lam B."/>
            <person name="Langin-Hooper S."/>
            <person name="Lee A."/>
            <person name="Lee J.M."/>
            <person name="Lenz C.A."/>
            <person name="Li J.H."/>
            <person name="Li Y.-P."/>
            <person name="Lin X."/>
            <person name="Liu S.X."/>
            <person name="Liu Z.A."/>
            <person name="Luros J.S."/>
            <person name="Maiti R."/>
            <person name="Marziali A."/>
            <person name="Militscher J."/>
            <person name="Miranda M."/>
            <person name="Nguyen M."/>
            <person name="Nierman W.C."/>
            <person name="Osborne B.I."/>
            <person name="Pai G."/>
            <person name="Peterson J."/>
            <person name="Pham P.K."/>
            <person name="Rizzo M."/>
            <person name="Rooney T."/>
            <person name="Rowley D."/>
            <person name="Sakano H."/>
            <person name="Salzberg S.L."/>
            <person name="Schwartz J.R."/>
            <person name="Shinn P."/>
            <person name="Southwick A.M."/>
            <person name="Sun H."/>
            <person name="Tallon L.J."/>
            <person name="Tambunga G."/>
            <person name="Toriumi M.J."/>
            <person name="Town C.D."/>
            <person name="Utterback T."/>
            <person name="Van Aken S."/>
            <person name="Vaysberg M."/>
            <person name="Vysotskaia V.S."/>
            <person name="Walker M."/>
            <person name="Wu D."/>
            <person name="Yu G."/>
            <person name="Fraser C.M."/>
            <person name="Venter J.C."/>
            <person name="Davis R.W."/>
        </authorList>
    </citation>
    <scope>NUCLEOTIDE SEQUENCE [LARGE SCALE GENOMIC DNA]</scope>
    <source>
        <strain>cv. Columbia</strain>
    </source>
</reference>
<reference key="2">
    <citation type="journal article" date="2017" name="Plant J.">
        <title>Araport11: a complete reannotation of the Arabidopsis thaliana reference genome.</title>
        <authorList>
            <person name="Cheng C.Y."/>
            <person name="Krishnakumar V."/>
            <person name="Chan A.P."/>
            <person name="Thibaud-Nissen F."/>
            <person name="Schobel S."/>
            <person name="Town C.D."/>
        </authorList>
    </citation>
    <scope>GENOME REANNOTATION</scope>
    <source>
        <strain>cv. Columbia</strain>
    </source>
</reference>
<reference key="3">
    <citation type="journal article" date="2003" name="Science">
        <title>Empirical analysis of transcriptional activity in the Arabidopsis genome.</title>
        <authorList>
            <person name="Yamada K."/>
            <person name="Lim J."/>
            <person name="Dale J.M."/>
            <person name="Chen H."/>
            <person name="Shinn P."/>
            <person name="Palm C.J."/>
            <person name="Southwick A.M."/>
            <person name="Wu H.C."/>
            <person name="Kim C.J."/>
            <person name="Nguyen M."/>
            <person name="Pham P.K."/>
            <person name="Cheuk R.F."/>
            <person name="Karlin-Newmann G."/>
            <person name="Liu S.X."/>
            <person name="Lam B."/>
            <person name="Sakano H."/>
            <person name="Wu T."/>
            <person name="Yu G."/>
            <person name="Miranda M."/>
            <person name="Quach H.L."/>
            <person name="Tripp M."/>
            <person name="Chang C.H."/>
            <person name="Lee J.M."/>
            <person name="Toriumi M.J."/>
            <person name="Chan M.M."/>
            <person name="Tang C.C."/>
            <person name="Onodera C.S."/>
            <person name="Deng J.M."/>
            <person name="Akiyama K."/>
            <person name="Ansari Y."/>
            <person name="Arakawa T."/>
            <person name="Banh J."/>
            <person name="Banno F."/>
            <person name="Bowser L."/>
            <person name="Brooks S.Y."/>
            <person name="Carninci P."/>
            <person name="Chao Q."/>
            <person name="Choy N."/>
            <person name="Enju A."/>
            <person name="Goldsmith A.D."/>
            <person name="Gurjal M."/>
            <person name="Hansen N.F."/>
            <person name="Hayashizaki Y."/>
            <person name="Johnson-Hopson C."/>
            <person name="Hsuan V.W."/>
            <person name="Iida K."/>
            <person name="Karnes M."/>
            <person name="Khan S."/>
            <person name="Koesema E."/>
            <person name="Ishida J."/>
            <person name="Jiang P.X."/>
            <person name="Jones T."/>
            <person name="Kawai J."/>
            <person name="Kamiya A."/>
            <person name="Meyers C."/>
            <person name="Nakajima M."/>
            <person name="Narusaka M."/>
            <person name="Seki M."/>
            <person name="Sakurai T."/>
            <person name="Satou M."/>
            <person name="Tamse R."/>
            <person name="Vaysberg M."/>
            <person name="Wallender E.K."/>
            <person name="Wong C."/>
            <person name="Yamamura Y."/>
            <person name="Yuan S."/>
            <person name="Shinozaki K."/>
            <person name="Davis R.W."/>
            <person name="Theologis A."/>
            <person name="Ecker J.R."/>
        </authorList>
    </citation>
    <scope>NUCLEOTIDE SEQUENCE [LARGE SCALE MRNA]</scope>
    <source>
        <strain>cv. Columbia</strain>
    </source>
</reference>
<reference key="4">
    <citation type="online journal article" date="1998" name="Plant Gene Register">
        <title>Nucleotide sequence of a cDNA encoding the E1 alpha subunit of the branched-chain alpha-keto acid dehydrogenase complex from Arabidopsis thaliana.</title>
        <authorList>
            <person name="Mooney B.P."/>
            <person name="Miernyk J.A."/>
            <person name="Randall D.D."/>
        </authorList>
        <locator>PGR98-168</locator>
    </citation>
    <scope>NUCLEOTIDE SEQUENCE [MRNA] OF 2-472</scope>
</reference>
<reference key="5">
    <citation type="journal article" date="2001" name="FEBS Lett.">
        <title>Leucine and its keto acid enhance the coordinated expression of genes for branched-chain amino acid catabolism in Arabidopsis under sugar starvation.</title>
        <authorList>
            <person name="Fujiki Y."/>
            <person name="Ito M."/>
            <person name="Nishida I."/>
            <person name="Watanabe A."/>
        </authorList>
    </citation>
    <scope>FUNCTION</scope>
    <scope>INDUCTION BY DARK AND SUCROSE</scope>
    <scope>INDUCTION BY LEUCINE AND KIC</scope>
</reference>
<accession>Q9LPL5</accession>
<accession>Q9ZT57</accession>
<proteinExistence type="evidence at transcript level"/>